<accession>O18767</accession>
<proteinExistence type="evidence at protein level"/>
<comment type="function">
    <text evidence="2">Degrades amelogenin, the major protein component of the enamel matrix and two of the macromolecules characterizing the cartilage extracellular matrix: aggrecan and the cartilage oligomeric matrix protein (COMP). May play a central role in tooth enamel formation. Cleaves aggrecan at the '360-Ser-|-Phe-361' site.</text>
</comment>
<comment type="cofactor">
    <cofactor evidence="1">
        <name>Zn(2+)</name>
        <dbReference type="ChEBI" id="CHEBI:29105"/>
    </cofactor>
    <text evidence="1">Binds 2 Zn(2+) ions per subunit.</text>
</comment>
<comment type="cofactor">
    <cofactor evidence="1">
        <name>Ca(2+)</name>
        <dbReference type="ChEBI" id="CHEBI:29108"/>
    </cofactor>
    <text evidence="1">Binds 2 calcium ions per subunit.</text>
</comment>
<comment type="subcellular location">
    <subcellularLocation>
        <location>Secreted</location>
        <location>Extracellular space</location>
        <location>Extracellular matrix</location>
    </subcellularLocation>
</comment>
<comment type="tissue specificity">
    <text>Expressed in the enamel organ.</text>
</comment>
<comment type="domain">
    <text>The conserved cysteine present in the cysteine-switch motif binds the catalytic zinc ion, thus inhibiting the enzyme. The dissociation of the cysteine from the zinc ion upon the activation-peptide release activates the enzyme.</text>
</comment>
<comment type="PTM">
    <text evidence="1">Autoactivates at least at the 105-Asn-|-Tyr-106 site.</text>
</comment>
<comment type="similarity">
    <text evidence="5">Belongs to the peptidase M10A family.</text>
</comment>
<sequence length="481" mass="53781">MLPASGLAVLLVTALKFSTAAPSLPAASPRTSRNNYRLAQAYLDKYYTKKGGPQIGEMVARGGNSTVKKIKELQEFFGLRVTGKLDRATMDVIKRPRCGVPDVANYRLFPGEPKWKKNTLTYRISKYTPSMTPAEVDRAMEMALRAWSSAVPLNFVRINAGEADIMISFETGDHGDSYPFDGPRGTLAHAFAPGEGLGGDTHFDNAEKWTMGTNGFNLFTVAAHEFGHALGLAHSTDPSALMFPTYKYQNPYGFRLPKDDVKGIQALYGPRRAFSGKPTAPHGPPHNPSIPDLCDSNLSFDAVTMLGKELLLFRDRIFWRRQVHLMSGIRPSTITSSFPQLMSNVDAAYEVAERGTAYFFKGPHYWITRGFQMQGPPRTIYDFGFPRYVQRIDAAVYLKDAQKTLFFVGDEYYSYDERKRKMEKDYPKSTEEEFSGVNGQIDAAVELNGYIYFFSGPKAYKSDTEKEDVVSELKSSSWIGC</sequence>
<feature type="signal peptide" evidence="3">
    <location>
        <begin position="1"/>
        <end position="20"/>
    </location>
</feature>
<feature type="propeptide" id="PRO_0000028831" evidence="1">
    <location>
        <begin position="21"/>
        <end position="105"/>
    </location>
</feature>
<feature type="chain" id="PRO_0000028832" description="Matrix metalloproteinase-20">
    <location>
        <begin position="106"/>
        <end position="481"/>
    </location>
</feature>
<feature type="repeat" description="Hemopexin 1">
    <location>
        <begin position="291"/>
        <end position="341"/>
    </location>
</feature>
<feature type="repeat" description="Hemopexin 2">
    <location>
        <begin position="342"/>
        <end position="387"/>
    </location>
</feature>
<feature type="repeat" description="Hemopexin 3">
    <location>
        <begin position="389"/>
        <end position="437"/>
    </location>
</feature>
<feature type="repeat" description="Hemopexin 4">
    <location>
        <begin position="438"/>
        <end position="481"/>
    </location>
</feature>
<feature type="short sequence motif" description="Cysteine switch" evidence="1">
    <location>
        <begin position="96"/>
        <end position="103"/>
    </location>
</feature>
<feature type="active site" evidence="4">
    <location>
        <position position="225"/>
    </location>
</feature>
<feature type="binding site" description="in inhibited form" evidence="1">
    <location>
        <position position="98"/>
    </location>
    <ligand>
        <name>Zn(2+)</name>
        <dbReference type="ChEBI" id="CHEBI:29105"/>
        <label>1</label>
        <note>catalytic</note>
    </ligand>
</feature>
<feature type="binding site" evidence="1">
    <location>
        <position position="162"/>
    </location>
    <ligand>
        <name>Ca(2+)</name>
        <dbReference type="ChEBI" id="CHEBI:29108"/>
        <label>1</label>
    </ligand>
</feature>
<feature type="binding site" evidence="1">
    <location>
        <position position="163"/>
    </location>
    <ligand>
        <name>Ca(2+)</name>
        <dbReference type="ChEBI" id="CHEBI:29108"/>
        <label>1</label>
    </ligand>
</feature>
<feature type="binding site" evidence="1">
    <location>
        <position position="164"/>
    </location>
    <ligand>
        <name>Ca(2+)</name>
        <dbReference type="ChEBI" id="CHEBI:29108"/>
        <label>1</label>
    </ligand>
</feature>
<feature type="binding site" evidence="1">
    <location>
        <position position="174"/>
    </location>
    <ligand>
        <name>Zn(2+)</name>
        <dbReference type="ChEBI" id="CHEBI:29105"/>
        <label>2</label>
    </ligand>
</feature>
<feature type="binding site" evidence="1">
    <location>
        <position position="176"/>
    </location>
    <ligand>
        <name>Zn(2+)</name>
        <dbReference type="ChEBI" id="CHEBI:29105"/>
        <label>2</label>
    </ligand>
</feature>
<feature type="binding site" evidence="1">
    <location>
        <position position="181"/>
    </location>
    <ligand>
        <name>Ca(2+)</name>
        <dbReference type="ChEBI" id="CHEBI:29108"/>
        <label>2</label>
    </ligand>
</feature>
<feature type="binding site" evidence="1">
    <location>
        <position position="182"/>
    </location>
    <ligand>
        <name>Ca(2+)</name>
        <dbReference type="ChEBI" id="CHEBI:29108"/>
        <label>2</label>
    </ligand>
</feature>
<feature type="binding site" evidence="1">
    <location>
        <position position="184"/>
    </location>
    <ligand>
        <name>Ca(2+)</name>
        <dbReference type="ChEBI" id="CHEBI:29108"/>
        <label>2</label>
    </ligand>
</feature>
<feature type="binding site" evidence="1">
    <location>
        <position position="186"/>
    </location>
    <ligand>
        <name>Ca(2+)</name>
        <dbReference type="ChEBI" id="CHEBI:29108"/>
        <label>2</label>
    </ligand>
</feature>
<feature type="binding site" evidence="1">
    <location>
        <position position="189"/>
    </location>
    <ligand>
        <name>Zn(2+)</name>
        <dbReference type="ChEBI" id="CHEBI:29105"/>
        <label>2</label>
    </ligand>
</feature>
<feature type="binding site" evidence="1">
    <location>
        <position position="195"/>
    </location>
    <ligand>
        <name>Ca(2+)</name>
        <dbReference type="ChEBI" id="CHEBI:29108"/>
        <label>1</label>
    </ligand>
</feature>
<feature type="binding site" evidence="1">
    <location>
        <position position="196"/>
    </location>
    <ligand>
        <name>Ca(2+)</name>
        <dbReference type="ChEBI" id="CHEBI:29108"/>
        <label>1</label>
    </ligand>
</feature>
<feature type="binding site" evidence="1">
    <location>
        <position position="198"/>
    </location>
    <ligand>
        <name>Ca(2+)</name>
        <dbReference type="ChEBI" id="CHEBI:29108"/>
        <label>1</label>
    </ligand>
</feature>
<feature type="binding site" evidence="1">
    <location>
        <position position="200"/>
    </location>
    <ligand>
        <name>Ca(2+)</name>
        <dbReference type="ChEBI" id="CHEBI:29108"/>
        <label>1</label>
    </ligand>
</feature>
<feature type="binding site" evidence="1">
    <location>
        <position position="202"/>
    </location>
    <ligand>
        <name>Zn(2+)</name>
        <dbReference type="ChEBI" id="CHEBI:29105"/>
        <label>2</label>
    </ligand>
</feature>
<feature type="binding site" evidence="1">
    <location>
        <position position="204"/>
    </location>
    <ligand>
        <name>Ca(2+)</name>
        <dbReference type="ChEBI" id="CHEBI:29108"/>
        <label>2</label>
    </ligand>
</feature>
<feature type="binding site" evidence="1">
    <location>
        <position position="207"/>
    </location>
    <ligand>
        <name>Ca(2+)</name>
        <dbReference type="ChEBI" id="CHEBI:29108"/>
        <label>2</label>
    </ligand>
</feature>
<feature type="binding site" evidence="1">
    <location>
        <position position="224"/>
    </location>
    <ligand>
        <name>Zn(2+)</name>
        <dbReference type="ChEBI" id="CHEBI:29105"/>
        <label>1</label>
        <note>catalytic</note>
    </ligand>
</feature>
<feature type="binding site" evidence="1">
    <location>
        <position position="228"/>
    </location>
    <ligand>
        <name>Zn(2+)</name>
        <dbReference type="ChEBI" id="CHEBI:29105"/>
        <label>1</label>
        <note>catalytic</note>
    </ligand>
</feature>
<feature type="binding site" evidence="1">
    <location>
        <position position="234"/>
    </location>
    <ligand>
        <name>Zn(2+)</name>
        <dbReference type="ChEBI" id="CHEBI:29105"/>
        <label>1</label>
        <note>catalytic</note>
    </ligand>
</feature>
<feature type="glycosylation site" description="N-linked (GlcNAc...) asparagine" evidence="3">
    <location>
        <position position="64"/>
    </location>
</feature>
<feature type="glycosylation site" description="N-linked (GlcNAc...) asparagine" evidence="3">
    <location>
        <position position="297"/>
    </location>
</feature>
<feature type="disulfide bond" evidence="1">
    <location>
        <begin position="294"/>
        <end position="481"/>
    </location>
</feature>
<feature type="sequence conflict" description="In Ref. 1; AA sequence." evidence="5" ref="1">
    <original>W</original>
    <variation>K</variation>
    <location>
        <position position="115"/>
    </location>
</feature>
<name>MMP20_BOVIN</name>
<evidence type="ECO:0000250" key="1"/>
<evidence type="ECO:0000250" key="2">
    <source>
        <dbReference type="UniProtKB" id="O60882"/>
    </source>
</evidence>
<evidence type="ECO:0000255" key="3"/>
<evidence type="ECO:0000255" key="4">
    <source>
        <dbReference type="PROSITE-ProRule" id="PRU10095"/>
    </source>
</evidence>
<evidence type="ECO:0000305" key="5"/>
<reference key="1">
    <citation type="journal article" date="1998" name="Eur. J. Oral Sci. 106 Suppl.">
        <title>Purification and sequencing of a 21 kDa and 25 kDa bovine enamel metalloproteinase.</title>
        <authorList>
            <person name="DenBesten P.K."/>
            <person name="Punzi J.S."/>
            <person name="Li W."/>
        </authorList>
    </citation>
    <scope>NUCLEOTIDE SEQUENCE [MRNA]</scope>
    <scope>PROTEIN SEQUENCE OF N-TERMINUS</scope>
    <source>
        <tissue>Enamel organ</tissue>
    </source>
</reference>
<reference key="2">
    <citation type="journal article" date="1999" name="Eur. J. Oral Sci.">
        <title>Activation of recombinant bovine matrix metalloproteinase-20 and its hydrolysis of two amelogenin oligopeptides.</title>
        <authorList>
            <person name="Li W."/>
            <person name="Machule D."/>
            <person name="Gao C."/>
            <person name="DenBesten P.K."/>
        </authorList>
    </citation>
    <scope>CHARACTERIZATION</scope>
</reference>
<keyword id="KW-0068">Autocatalytic cleavage</keyword>
<keyword id="KW-0106">Calcium</keyword>
<keyword id="KW-0903">Direct protein sequencing</keyword>
<keyword id="KW-1015">Disulfide bond</keyword>
<keyword id="KW-0272">Extracellular matrix</keyword>
<keyword id="KW-0325">Glycoprotein</keyword>
<keyword id="KW-0378">Hydrolase</keyword>
<keyword id="KW-0479">Metal-binding</keyword>
<keyword id="KW-0482">Metalloprotease</keyword>
<keyword id="KW-0645">Protease</keyword>
<keyword id="KW-1185">Reference proteome</keyword>
<keyword id="KW-0677">Repeat</keyword>
<keyword id="KW-0964">Secreted</keyword>
<keyword id="KW-0732">Signal</keyword>
<keyword id="KW-0862">Zinc</keyword>
<keyword id="KW-0865">Zymogen</keyword>
<organism>
    <name type="scientific">Bos taurus</name>
    <name type="common">Bovine</name>
    <dbReference type="NCBI Taxonomy" id="9913"/>
    <lineage>
        <taxon>Eukaryota</taxon>
        <taxon>Metazoa</taxon>
        <taxon>Chordata</taxon>
        <taxon>Craniata</taxon>
        <taxon>Vertebrata</taxon>
        <taxon>Euteleostomi</taxon>
        <taxon>Mammalia</taxon>
        <taxon>Eutheria</taxon>
        <taxon>Laurasiatheria</taxon>
        <taxon>Artiodactyla</taxon>
        <taxon>Ruminantia</taxon>
        <taxon>Pecora</taxon>
        <taxon>Bovidae</taxon>
        <taxon>Bovinae</taxon>
        <taxon>Bos</taxon>
    </lineage>
</organism>
<protein>
    <recommendedName>
        <fullName>Matrix metalloproteinase-20</fullName>
        <shortName>MMP-20</shortName>
        <ecNumber>3.4.24.-</ecNumber>
    </recommendedName>
    <alternativeName>
        <fullName>Enamel metalloproteinase</fullName>
    </alternativeName>
    <alternativeName>
        <fullName>Enamelysin</fullName>
    </alternativeName>
</protein>
<gene>
    <name type="primary">MMP20</name>
</gene>
<dbReference type="EC" id="3.4.24.-"/>
<dbReference type="EMBL" id="AF009922">
    <property type="protein sequence ID" value="AAB66599.1"/>
    <property type="molecule type" value="mRNA"/>
</dbReference>
<dbReference type="RefSeq" id="NP_776816.1">
    <property type="nucleotide sequence ID" value="NM_174391.2"/>
</dbReference>
<dbReference type="SMR" id="O18767"/>
<dbReference type="STRING" id="9913.ENSBTAP00000018936"/>
<dbReference type="MEROPS" id="M10.019"/>
<dbReference type="GlyCosmos" id="O18767">
    <property type="glycosylation" value="2 sites, No reported glycans"/>
</dbReference>
<dbReference type="GlyGen" id="O18767">
    <property type="glycosylation" value="2 sites"/>
</dbReference>
<dbReference type="PaxDb" id="9913-ENSBTAP00000018936"/>
<dbReference type="GeneID" id="281916"/>
<dbReference type="KEGG" id="bta:281916"/>
<dbReference type="CTD" id="9313"/>
<dbReference type="eggNOG" id="KOG1565">
    <property type="taxonomic scope" value="Eukaryota"/>
</dbReference>
<dbReference type="InParanoid" id="O18767"/>
<dbReference type="OrthoDB" id="406838at2759"/>
<dbReference type="BRENDA" id="3.4.24.B6">
    <property type="organism ID" value="908"/>
</dbReference>
<dbReference type="Proteomes" id="UP000009136">
    <property type="component" value="Unplaced"/>
</dbReference>
<dbReference type="GO" id="GO:0031012">
    <property type="term" value="C:extracellular matrix"/>
    <property type="evidence" value="ECO:0007669"/>
    <property type="project" value="InterPro"/>
</dbReference>
<dbReference type="GO" id="GO:0005576">
    <property type="term" value="C:extracellular region"/>
    <property type="evidence" value="ECO:0007669"/>
    <property type="project" value="UniProtKB-KW"/>
</dbReference>
<dbReference type="GO" id="GO:0004222">
    <property type="term" value="F:metalloendopeptidase activity"/>
    <property type="evidence" value="ECO:0000318"/>
    <property type="project" value="GO_Central"/>
</dbReference>
<dbReference type="GO" id="GO:0008270">
    <property type="term" value="F:zinc ion binding"/>
    <property type="evidence" value="ECO:0007669"/>
    <property type="project" value="InterPro"/>
</dbReference>
<dbReference type="GO" id="GO:0097186">
    <property type="term" value="P:amelogenesis"/>
    <property type="evidence" value="ECO:0000318"/>
    <property type="project" value="GO_Central"/>
</dbReference>
<dbReference type="GO" id="GO:0030574">
    <property type="term" value="P:collagen catabolic process"/>
    <property type="evidence" value="ECO:0000318"/>
    <property type="project" value="GO_Central"/>
</dbReference>
<dbReference type="GO" id="GO:0030198">
    <property type="term" value="P:extracellular matrix organization"/>
    <property type="evidence" value="ECO:0000318"/>
    <property type="project" value="GO_Central"/>
</dbReference>
<dbReference type="GO" id="GO:0006508">
    <property type="term" value="P:proteolysis"/>
    <property type="evidence" value="ECO:0007669"/>
    <property type="project" value="UniProtKB-KW"/>
</dbReference>
<dbReference type="CDD" id="cd00094">
    <property type="entry name" value="HX"/>
    <property type="match status" value="1"/>
</dbReference>
<dbReference type="CDD" id="cd04278">
    <property type="entry name" value="ZnMc_MMP"/>
    <property type="match status" value="1"/>
</dbReference>
<dbReference type="FunFam" id="3.40.390.10:FF:000007">
    <property type="entry name" value="Collagenase 3"/>
    <property type="match status" value="1"/>
</dbReference>
<dbReference type="FunFam" id="2.110.10.10:FF:000002">
    <property type="entry name" value="Matrix metallopeptidase 3"/>
    <property type="match status" value="1"/>
</dbReference>
<dbReference type="Gene3D" id="3.40.390.10">
    <property type="entry name" value="Collagenase (Catalytic Domain)"/>
    <property type="match status" value="1"/>
</dbReference>
<dbReference type="Gene3D" id="2.110.10.10">
    <property type="entry name" value="Hemopexin-like domain"/>
    <property type="match status" value="1"/>
</dbReference>
<dbReference type="InterPro" id="IPR000585">
    <property type="entry name" value="Hemopexin-like_dom"/>
</dbReference>
<dbReference type="InterPro" id="IPR036375">
    <property type="entry name" value="Hemopexin-like_dom_sf"/>
</dbReference>
<dbReference type="InterPro" id="IPR018487">
    <property type="entry name" value="Hemopexin-like_repeat"/>
</dbReference>
<dbReference type="InterPro" id="IPR033739">
    <property type="entry name" value="M10A_MMP"/>
</dbReference>
<dbReference type="InterPro" id="IPR024079">
    <property type="entry name" value="MetalloPept_cat_dom_sf"/>
</dbReference>
<dbReference type="InterPro" id="IPR001818">
    <property type="entry name" value="Pept_M10_metallopeptidase"/>
</dbReference>
<dbReference type="InterPro" id="IPR021190">
    <property type="entry name" value="Pept_M10A"/>
</dbReference>
<dbReference type="InterPro" id="IPR021158">
    <property type="entry name" value="Pept_M10A_Zn_BS"/>
</dbReference>
<dbReference type="InterPro" id="IPR006026">
    <property type="entry name" value="Peptidase_Metallo"/>
</dbReference>
<dbReference type="InterPro" id="IPR002477">
    <property type="entry name" value="Peptidoglycan-bd-like"/>
</dbReference>
<dbReference type="InterPro" id="IPR036365">
    <property type="entry name" value="PGBD-like_sf"/>
</dbReference>
<dbReference type="PANTHER" id="PTHR10201">
    <property type="entry name" value="MATRIX METALLOPROTEINASE"/>
    <property type="match status" value="1"/>
</dbReference>
<dbReference type="PANTHER" id="PTHR10201:SF125">
    <property type="entry name" value="MATRIX METALLOPROTEINASE-20"/>
    <property type="match status" value="1"/>
</dbReference>
<dbReference type="Pfam" id="PF00045">
    <property type="entry name" value="Hemopexin"/>
    <property type="match status" value="3"/>
</dbReference>
<dbReference type="Pfam" id="PF00413">
    <property type="entry name" value="Peptidase_M10"/>
    <property type="match status" value="1"/>
</dbReference>
<dbReference type="Pfam" id="PF01471">
    <property type="entry name" value="PG_binding_1"/>
    <property type="match status" value="1"/>
</dbReference>
<dbReference type="PIRSF" id="PIRSF001191">
    <property type="entry name" value="Peptidase_M10A_matrix"/>
    <property type="match status" value="1"/>
</dbReference>
<dbReference type="PRINTS" id="PR00138">
    <property type="entry name" value="MATRIXIN"/>
</dbReference>
<dbReference type="SMART" id="SM00120">
    <property type="entry name" value="HX"/>
    <property type="match status" value="4"/>
</dbReference>
<dbReference type="SMART" id="SM00235">
    <property type="entry name" value="ZnMc"/>
    <property type="match status" value="1"/>
</dbReference>
<dbReference type="SUPFAM" id="SSF50923">
    <property type="entry name" value="Hemopexin-like domain"/>
    <property type="match status" value="1"/>
</dbReference>
<dbReference type="SUPFAM" id="SSF55486">
    <property type="entry name" value="Metalloproteases ('zincins'), catalytic domain"/>
    <property type="match status" value="1"/>
</dbReference>
<dbReference type="SUPFAM" id="SSF47090">
    <property type="entry name" value="PGBD-like"/>
    <property type="match status" value="1"/>
</dbReference>
<dbReference type="PROSITE" id="PS00546">
    <property type="entry name" value="CYSTEINE_SWITCH"/>
    <property type="match status" value="1"/>
</dbReference>
<dbReference type="PROSITE" id="PS51642">
    <property type="entry name" value="HEMOPEXIN_2"/>
    <property type="match status" value="4"/>
</dbReference>
<dbReference type="PROSITE" id="PS00142">
    <property type="entry name" value="ZINC_PROTEASE"/>
    <property type="match status" value="1"/>
</dbReference>